<proteinExistence type="inferred from homology"/>
<comment type="function">
    <text evidence="1">PsaA and PsaB bind P700, the primary electron donor of photosystem I (PSI), as well as the electron acceptors A0, A1 and FX. PSI is a plastocyanin/cytochrome c6-ferredoxin oxidoreductase, converting photonic excitation into a charge separation, which transfers an electron from the donor P700 chlorophyll pair to the spectroscopically characterized acceptors A0, A1, FX, FA and FB in turn. Oxidized P700 is reduced on the lumenal side of the thylakoid membrane by plastocyanin or cytochrome c6.</text>
</comment>
<comment type="catalytic activity">
    <reaction evidence="1">
        <text>reduced [plastocyanin] + hnu + oxidized [2Fe-2S]-[ferredoxin] = oxidized [plastocyanin] + reduced [2Fe-2S]-[ferredoxin]</text>
        <dbReference type="Rhea" id="RHEA:30407"/>
        <dbReference type="Rhea" id="RHEA-COMP:10000"/>
        <dbReference type="Rhea" id="RHEA-COMP:10001"/>
        <dbReference type="Rhea" id="RHEA-COMP:10039"/>
        <dbReference type="Rhea" id="RHEA-COMP:10040"/>
        <dbReference type="ChEBI" id="CHEBI:29036"/>
        <dbReference type="ChEBI" id="CHEBI:30212"/>
        <dbReference type="ChEBI" id="CHEBI:33737"/>
        <dbReference type="ChEBI" id="CHEBI:33738"/>
        <dbReference type="ChEBI" id="CHEBI:49552"/>
        <dbReference type="EC" id="1.97.1.12"/>
    </reaction>
</comment>
<comment type="cofactor">
    <text evidence="1">PSI electron transfer chain: 5 chlorophyll a, 1 chlorophyll a', 2 phylloquinones and 3 4Fe-4S clusters. PSI core antenna: 90 chlorophyll a, 22 carotenoids, 3 phospholipids and 1 galactolipid. P700 is a chlorophyll a/chlorophyll a' dimer, A0 is one or more chlorophyll a, A1 is one or both phylloquinones and FX is a shared 4Fe-4S iron-sulfur center.</text>
</comment>
<comment type="subunit">
    <text evidence="1">The PsaA/B heterodimer binds the P700 chlorophyll special pair and subsequent electron acceptors. PSI consists of a core antenna complex that captures photons, and an electron transfer chain that converts photonic excitation into a charge separation. The cyanobacterial PSI reaction center is composed of one copy each of PsaA,B,C,D,E,F,I,J,K,L,M and X, and forms trimeric complexes.</text>
</comment>
<comment type="subcellular location">
    <subcellularLocation>
        <location evidence="1">Cellular thylakoid membrane</location>
        <topology evidence="1">Multi-pass membrane protein</topology>
    </subcellularLocation>
</comment>
<comment type="similarity">
    <text evidence="1">Belongs to the PsaA/PsaB family.</text>
</comment>
<evidence type="ECO:0000255" key="1">
    <source>
        <dbReference type="HAMAP-Rule" id="MF_00482"/>
    </source>
</evidence>
<dbReference type="EC" id="1.97.1.12" evidence="1"/>
<dbReference type="EMBL" id="CP000117">
    <property type="protein sequence ID" value="ABA22182.1"/>
    <property type="molecule type" value="Genomic_DNA"/>
</dbReference>
<dbReference type="SMR" id="Q3MA04"/>
<dbReference type="STRING" id="240292.Ava_2567"/>
<dbReference type="KEGG" id="ava:Ava_2567"/>
<dbReference type="eggNOG" id="COG2885">
    <property type="taxonomic scope" value="Bacteria"/>
</dbReference>
<dbReference type="HOGENOM" id="CLU_016126_1_0_3"/>
<dbReference type="Proteomes" id="UP000002533">
    <property type="component" value="Chromosome"/>
</dbReference>
<dbReference type="GO" id="GO:0009522">
    <property type="term" value="C:photosystem I"/>
    <property type="evidence" value="ECO:0007669"/>
    <property type="project" value="UniProtKB-KW"/>
</dbReference>
<dbReference type="GO" id="GO:0031676">
    <property type="term" value="C:plasma membrane-derived thylakoid membrane"/>
    <property type="evidence" value="ECO:0007669"/>
    <property type="project" value="UniProtKB-SubCell"/>
</dbReference>
<dbReference type="GO" id="GO:0051539">
    <property type="term" value="F:4 iron, 4 sulfur cluster binding"/>
    <property type="evidence" value="ECO:0007669"/>
    <property type="project" value="UniProtKB-KW"/>
</dbReference>
<dbReference type="GO" id="GO:0016168">
    <property type="term" value="F:chlorophyll binding"/>
    <property type="evidence" value="ECO:0007669"/>
    <property type="project" value="UniProtKB-KW"/>
</dbReference>
<dbReference type="GO" id="GO:0009055">
    <property type="term" value="F:electron transfer activity"/>
    <property type="evidence" value="ECO:0007669"/>
    <property type="project" value="UniProtKB-UniRule"/>
</dbReference>
<dbReference type="GO" id="GO:0000287">
    <property type="term" value="F:magnesium ion binding"/>
    <property type="evidence" value="ECO:0007669"/>
    <property type="project" value="UniProtKB-UniRule"/>
</dbReference>
<dbReference type="GO" id="GO:0016491">
    <property type="term" value="F:oxidoreductase activity"/>
    <property type="evidence" value="ECO:0007669"/>
    <property type="project" value="UniProtKB-KW"/>
</dbReference>
<dbReference type="GO" id="GO:0015979">
    <property type="term" value="P:photosynthesis"/>
    <property type="evidence" value="ECO:0007669"/>
    <property type="project" value="UniProtKB-UniRule"/>
</dbReference>
<dbReference type="FunFam" id="1.20.1130.10:FF:000001">
    <property type="entry name" value="Photosystem I P700 chlorophyll a apoprotein A2"/>
    <property type="match status" value="1"/>
</dbReference>
<dbReference type="Gene3D" id="1.20.1130.10">
    <property type="entry name" value="Photosystem I PsaA/PsaB"/>
    <property type="match status" value="1"/>
</dbReference>
<dbReference type="HAMAP" id="MF_00482">
    <property type="entry name" value="PSI_PsaB"/>
    <property type="match status" value="1"/>
</dbReference>
<dbReference type="InterPro" id="IPR001280">
    <property type="entry name" value="PSI_PsaA/B"/>
</dbReference>
<dbReference type="InterPro" id="IPR020586">
    <property type="entry name" value="PSI_PsaA/B_CS"/>
</dbReference>
<dbReference type="InterPro" id="IPR036408">
    <property type="entry name" value="PSI_PsaA/B_sf"/>
</dbReference>
<dbReference type="InterPro" id="IPR006244">
    <property type="entry name" value="PSI_PsaB"/>
</dbReference>
<dbReference type="NCBIfam" id="TIGR01336">
    <property type="entry name" value="psaB"/>
    <property type="match status" value="1"/>
</dbReference>
<dbReference type="PANTHER" id="PTHR30128">
    <property type="entry name" value="OUTER MEMBRANE PROTEIN, OMPA-RELATED"/>
    <property type="match status" value="1"/>
</dbReference>
<dbReference type="PANTHER" id="PTHR30128:SF19">
    <property type="entry name" value="PHOTOSYSTEM I P700 CHLOROPHYLL A APOPROTEIN A1-RELATED"/>
    <property type="match status" value="1"/>
</dbReference>
<dbReference type="Pfam" id="PF00223">
    <property type="entry name" value="PsaA_PsaB"/>
    <property type="match status" value="1"/>
</dbReference>
<dbReference type="PIRSF" id="PIRSF002905">
    <property type="entry name" value="PSI_A"/>
    <property type="match status" value="1"/>
</dbReference>
<dbReference type="PRINTS" id="PR00257">
    <property type="entry name" value="PHOTSYSPSAAB"/>
</dbReference>
<dbReference type="SUPFAM" id="SSF81558">
    <property type="entry name" value="Photosystem I subunits PsaA/PsaB"/>
    <property type="match status" value="1"/>
</dbReference>
<dbReference type="PROSITE" id="PS00419">
    <property type="entry name" value="PHOTOSYSTEM_I_PSAAB"/>
    <property type="match status" value="1"/>
</dbReference>
<name>PSAB2_TRIV2</name>
<gene>
    <name evidence="1" type="primary">psaB2</name>
    <name type="ordered locus">Ava_2567</name>
</gene>
<protein>
    <recommendedName>
        <fullName evidence="1">Photosystem I P700 chlorophyll a apoprotein A2 2</fullName>
        <ecNumber evidence="1">1.97.1.12</ecNumber>
    </recommendedName>
    <alternativeName>
        <fullName evidence="1">PsaB 2</fullName>
    </alternativeName>
</protein>
<organism>
    <name type="scientific">Trichormus variabilis (strain ATCC 29413 / PCC 7937)</name>
    <name type="common">Anabaena variabilis</name>
    <dbReference type="NCBI Taxonomy" id="240292"/>
    <lineage>
        <taxon>Bacteria</taxon>
        <taxon>Bacillati</taxon>
        <taxon>Cyanobacteriota</taxon>
        <taxon>Cyanophyceae</taxon>
        <taxon>Nostocales</taxon>
        <taxon>Nostocaceae</taxon>
        <taxon>Trichormus</taxon>
    </lineage>
</organism>
<reference key="1">
    <citation type="journal article" date="2014" name="Stand. Genomic Sci.">
        <title>Complete genome sequence of Anabaena variabilis ATCC 29413.</title>
        <authorList>
            <person name="Thiel T."/>
            <person name="Pratte B.S."/>
            <person name="Zhong J."/>
            <person name="Goodwin L."/>
            <person name="Copeland A."/>
            <person name="Lucas S."/>
            <person name="Han C."/>
            <person name="Pitluck S."/>
            <person name="Land M.L."/>
            <person name="Kyrpides N.C."/>
            <person name="Woyke T."/>
        </authorList>
    </citation>
    <scope>NUCLEOTIDE SEQUENCE [LARGE SCALE GENOMIC DNA]</scope>
    <source>
        <strain>ATCC 29413 / PCC 7937</strain>
    </source>
</reference>
<feature type="chain" id="PRO_0000300015" description="Photosystem I P700 chlorophyll a apoprotein A2 2">
    <location>
        <begin position="1"/>
        <end position="742"/>
    </location>
</feature>
<feature type="transmembrane region" description="Helical; Name=I" evidence="1">
    <location>
        <begin position="46"/>
        <end position="69"/>
    </location>
</feature>
<feature type="transmembrane region" description="Helical; Name=II" evidence="1">
    <location>
        <begin position="135"/>
        <end position="158"/>
    </location>
</feature>
<feature type="transmembrane region" description="Helical; Name=III" evidence="1">
    <location>
        <begin position="175"/>
        <end position="199"/>
    </location>
</feature>
<feature type="transmembrane region" description="Helical; Name=IV" evidence="1">
    <location>
        <begin position="273"/>
        <end position="291"/>
    </location>
</feature>
<feature type="transmembrane region" description="Helical; Name=V" evidence="1">
    <location>
        <begin position="334"/>
        <end position="357"/>
    </location>
</feature>
<feature type="transmembrane region" description="Helical; Name=VI" evidence="1">
    <location>
        <begin position="373"/>
        <end position="399"/>
    </location>
</feature>
<feature type="transmembrane region" description="Helical; Name=VII" evidence="1">
    <location>
        <begin position="421"/>
        <end position="443"/>
    </location>
</feature>
<feature type="transmembrane region" description="Helical; Name=VIII" evidence="1">
    <location>
        <begin position="524"/>
        <end position="542"/>
    </location>
</feature>
<feature type="transmembrane region" description="Helical; Name=IX" evidence="1">
    <location>
        <begin position="583"/>
        <end position="604"/>
    </location>
</feature>
<feature type="transmembrane region" description="Helical; Name=X" evidence="1">
    <location>
        <begin position="651"/>
        <end position="673"/>
    </location>
</feature>
<feature type="transmembrane region" description="Helical; Name=XI" evidence="1">
    <location>
        <begin position="715"/>
        <end position="735"/>
    </location>
</feature>
<feature type="binding site" evidence="1">
    <location>
        <position position="566"/>
    </location>
    <ligand>
        <name>[4Fe-4S] cluster</name>
        <dbReference type="ChEBI" id="CHEBI:49883"/>
        <note>ligand shared between dimeric partners</note>
    </ligand>
</feature>
<feature type="binding site" evidence="1">
    <location>
        <position position="575"/>
    </location>
    <ligand>
        <name>[4Fe-4S] cluster</name>
        <dbReference type="ChEBI" id="CHEBI:49883"/>
        <note>ligand shared between dimeric partners</note>
    </ligand>
</feature>
<feature type="binding site" description="axial binding residue" evidence="1">
    <location>
        <position position="662"/>
    </location>
    <ligand>
        <name>chlorophyll a</name>
        <dbReference type="ChEBI" id="CHEBI:58416"/>
        <label>B1</label>
    </ligand>
    <ligandPart>
        <name>Mg</name>
        <dbReference type="ChEBI" id="CHEBI:25107"/>
    </ligandPart>
</feature>
<feature type="binding site" description="axial binding residue" evidence="1">
    <location>
        <position position="670"/>
    </location>
    <ligand>
        <name>chlorophyll a</name>
        <dbReference type="ChEBI" id="CHEBI:58416"/>
        <label>B3</label>
    </ligand>
    <ligandPart>
        <name>Mg</name>
        <dbReference type="ChEBI" id="CHEBI:25107"/>
    </ligandPart>
</feature>
<feature type="binding site" evidence="1">
    <location>
        <position position="678"/>
    </location>
    <ligand>
        <name>chlorophyll a</name>
        <dbReference type="ChEBI" id="CHEBI:58416"/>
        <label>B3</label>
    </ligand>
</feature>
<feature type="binding site" evidence="1">
    <location>
        <position position="679"/>
    </location>
    <ligand>
        <name>phylloquinone</name>
        <dbReference type="ChEBI" id="CHEBI:18067"/>
        <label>B</label>
    </ligand>
</feature>
<sequence>MATKYPKFSRDLAQDPTTRRIWYAIATGNDFESHDGITEENLYQKIFATHFGHVAIIFLWASSLLFHVAWQGNFEQWIKDPLHIRPIAHAIWDPHFGEPAIEAFSQGGANYPVNIAYSGVYHWWYTIGMRTNNDLYQGSIFLLLLAALFLFAGWLHLQPKFRPSLTWFKSAEPRLNHHLAGLFGVSSLAWAGHLIHVAIPESRGVHVGWRNFLTTLPHPAGLTPFWMGNWGVYAENADTTGHIFGTSQGAGTAILTFLGGFHPQTESLWLTDMAHHHLAIAVIFIIAGHMYRTNFGIGHSIKEMLNARQFFGIRTEGQFNLPHQGLYDTYNNSLHFQLSIHLAALGTALSLVAQHMYSLPPYAFIAKDFTTQAALYTHHQYIAGFLMVGAFAHAGIFWVRDYDPEQNQGNVLDRVLKHKEAIISHLSWVSLFLGFHTLGLYVHNDVVVAFGTPEKQILIEPVFAQFIQAAHGKLLYGMDTLLSNPDSIAYTAWPNHANVWLPNWLEAINSGTNSLFLTIGPGDFLVHHAIALGLHTTTLICVKGALDARGTKLMPDKKDFGFTFPCDGPGRGGTCQTSSWEQSFYLALFWMLNLLGWVTFYWHWKHLGVWQGNVAQFNENSTYLMGWFRDYLWANSAQLINGYNPYGTNNLSVWAWMFLFGHLVWATGFMFLISWRGYWQELIETLVWAHERTPLANLVRWKDKPVALSIVQGWLVGLAHFTVGYILTYAAFLIASTAGKFG</sequence>
<keyword id="KW-0004">4Fe-4S</keyword>
<keyword id="KW-0148">Chlorophyll</keyword>
<keyword id="KW-0157">Chromophore</keyword>
<keyword id="KW-0249">Electron transport</keyword>
<keyword id="KW-0408">Iron</keyword>
<keyword id="KW-0411">Iron-sulfur</keyword>
<keyword id="KW-0460">Magnesium</keyword>
<keyword id="KW-0472">Membrane</keyword>
<keyword id="KW-0479">Metal-binding</keyword>
<keyword id="KW-0560">Oxidoreductase</keyword>
<keyword id="KW-0602">Photosynthesis</keyword>
<keyword id="KW-0603">Photosystem I</keyword>
<keyword id="KW-0793">Thylakoid</keyword>
<keyword id="KW-0812">Transmembrane</keyword>
<keyword id="KW-1133">Transmembrane helix</keyword>
<keyword id="KW-0813">Transport</keyword>
<accession>Q3MA04</accession>